<evidence type="ECO:0000255" key="1">
    <source>
        <dbReference type="HAMAP-Rule" id="MF_00244"/>
    </source>
</evidence>
<feature type="chain" id="PRO_1000100768" description="Probable nicotinate-nucleotide adenylyltransferase">
    <location>
        <begin position="1"/>
        <end position="198"/>
    </location>
</feature>
<gene>
    <name evidence="1" type="primary">nadD</name>
    <name type="ordered locus">Cphamn1_2488</name>
</gene>
<reference key="1">
    <citation type="submission" date="2008-06" db="EMBL/GenBank/DDBJ databases">
        <title>Complete sequence of Chlorobium phaeobacteroides BS1.</title>
        <authorList>
            <consortium name="US DOE Joint Genome Institute"/>
            <person name="Lucas S."/>
            <person name="Copeland A."/>
            <person name="Lapidus A."/>
            <person name="Glavina del Rio T."/>
            <person name="Dalin E."/>
            <person name="Tice H."/>
            <person name="Bruce D."/>
            <person name="Goodwin L."/>
            <person name="Pitluck S."/>
            <person name="Schmutz J."/>
            <person name="Larimer F."/>
            <person name="Land M."/>
            <person name="Hauser L."/>
            <person name="Kyrpides N."/>
            <person name="Ovchinnikova G."/>
            <person name="Li T."/>
            <person name="Liu Z."/>
            <person name="Zhao F."/>
            <person name="Overmann J."/>
            <person name="Bryant D.A."/>
            <person name="Richardson P."/>
        </authorList>
    </citation>
    <scope>NUCLEOTIDE SEQUENCE [LARGE SCALE GENOMIC DNA]</scope>
    <source>
        <strain>BS1</strain>
    </source>
</reference>
<protein>
    <recommendedName>
        <fullName evidence="1">Probable nicotinate-nucleotide adenylyltransferase</fullName>
        <ecNumber evidence="1">2.7.7.18</ecNumber>
    </recommendedName>
    <alternativeName>
        <fullName evidence="1">Deamido-NAD(+) diphosphorylase</fullName>
    </alternativeName>
    <alternativeName>
        <fullName evidence="1">Deamido-NAD(+) pyrophosphorylase</fullName>
    </alternativeName>
    <alternativeName>
        <fullName evidence="1">Nicotinate mononucleotide adenylyltransferase</fullName>
        <shortName evidence="1">NaMN adenylyltransferase</shortName>
    </alternativeName>
</protein>
<proteinExistence type="inferred from homology"/>
<organism>
    <name type="scientific">Chlorobium phaeobacteroides (strain BS1)</name>
    <dbReference type="NCBI Taxonomy" id="331678"/>
    <lineage>
        <taxon>Bacteria</taxon>
        <taxon>Pseudomonadati</taxon>
        <taxon>Chlorobiota</taxon>
        <taxon>Chlorobiia</taxon>
        <taxon>Chlorobiales</taxon>
        <taxon>Chlorobiaceae</taxon>
        <taxon>Chlorobium/Pelodictyon group</taxon>
        <taxon>Chlorobium</taxon>
    </lineage>
</organism>
<dbReference type="EC" id="2.7.7.18" evidence="1"/>
<dbReference type="EMBL" id="CP001101">
    <property type="protein sequence ID" value="ACE05382.1"/>
    <property type="molecule type" value="Genomic_DNA"/>
</dbReference>
<dbReference type="SMR" id="B3EQ84"/>
<dbReference type="STRING" id="331678.Cphamn1_2488"/>
<dbReference type="KEGG" id="cpb:Cphamn1_2488"/>
<dbReference type="eggNOG" id="COG1057">
    <property type="taxonomic scope" value="Bacteria"/>
</dbReference>
<dbReference type="HOGENOM" id="CLU_069765_3_2_10"/>
<dbReference type="OrthoDB" id="5295945at2"/>
<dbReference type="UniPathway" id="UPA00253">
    <property type="reaction ID" value="UER00332"/>
</dbReference>
<dbReference type="GO" id="GO:0005524">
    <property type="term" value="F:ATP binding"/>
    <property type="evidence" value="ECO:0007669"/>
    <property type="project" value="UniProtKB-KW"/>
</dbReference>
<dbReference type="GO" id="GO:0004515">
    <property type="term" value="F:nicotinate-nucleotide adenylyltransferase activity"/>
    <property type="evidence" value="ECO:0007669"/>
    <property type="project" value="UniProtKB-UniRule"/>
</dbReference>
<dbReference type="GO" id="GO:0009435">
    <property type="term" value="P:NAD biosynthetic process"/>
    <property type="evidence" value="ECO:0007669"/>
    <property type="project" value="UniProtKB-UniRule"/>
</dbReference>
<dbReference type="CDD" id="cd02165">
    <property type="entry name" value="NMNAT"/>
    <property type="match status" value="1"/>
</dbReference>
<dbReference type="Gene3D" id="3.40.50.620">
    <property type="entry name" value="HUPs"/>
    <property type="match status" value="1"/>
</dbReference>
<dbReference type="HAMAP" id="MF_00244">
    <property type="entry name" value="NaMN_adenylyltr"/>
    <property type="match status" value="1"/>
</dbReference>
<dbReference type="InterPro" id="IPR004821">
    <property type="entry name" value="Cyt_trans-like"/>
</dbReference>
<dbReference type="InterPro" id="IPR005248">
    <property type="entry name" value="NadD/NMNAT"/>
</dbReference>
<dbReference type="InterPro" id="IPR014729">
    <property type="entry name" value="Rossmann-like_a/b/a_fold"/>
</dbReference>
<dbReference type="NCBIfam" id="TIGR00125">
    <property type="entry name" value="cyt_tran_rel"/>
    <property type="match status" value="1"/>
</dbReference>
<dbReference type="NCBIfam" id="TIGR00482">
    <property type="entry name" value="nicotinate (nicotinamide) nucleotide adenylyltransferase"/>
    <property type="match status" value="1"/>
</dbReference>
<dbReference type="PANTHER" id="PTHR39321">
    <property type="entry name" value="NICOTINATE-NUCLEOTIDE ADENYLYLTRANSFERASE-RELATED"/>
    <property type="match status" value="1"/>
</dbReference>
<dbReference type="PANTHER" id="PTHR39321:SF3">
    <property type="entry name" value="PHOSPHOPANTETHEINE ADENYLYLTRANSFERASE"/>
    <property type="match status" value="1"/>
</dbReference>
<dbReference type="Pfam" id="PF01467">
    <property type="entry name" value="CTP_transf_like"/>
    <property type="match status" value="1"/>
</dbReference>
<dbReference type="SUPFAM" id="SSF52374">
    <property type="entry name" value="Nucleotidylyl transferase"/>
    <property type="match status" value="1"/>
</dbReference>
<keyword id="KW-0067">ATP-binding</keyword>
<keyword id="KW-0520">NAD</keyword>
<keyword id="KW-0547">Nucleotide-binding</keyword>
<keyword id="KW-0548">Nucleotidyltransferase</keyword>
<keyword id="KW-0662">Pyridine nucleotide biosynthesis</keyword>
<keyword id="KW-0808">Transferase</keyword>
<comment type="function">
    <text evidence="1">Catalyzes the reversible adenylation of nicotinate mononucleotide (NaMN) to nicotinic acid adenine dinucleotide (NaAD).</text>
</comment>
<comment type="catalytic activity">
    <reaction evidence="1">
        <text>nicotinate beta-D-ribonucleotide + ATP + H(+) = deamido-NAD(+) + diphosphate</text>
        <dbReference type="Rhea" id="RHEA:22860"/>
        <dbReference type="ChEBI" id="CHEBI:15378"/>
        <dbReference type="ChEBI" id="CHEBI:30616"/>
        <dbReference type="ChEBI" id="CHEBI:33019"/>
        <dbReference type="ChEBI" id="CHEBI:57502"/>
        <dbReference type="ChEBI" id="CHEBI:58437"/>
        <dbReference type="EC" id="2.7.7.18"/>
    </reaction>
</comment>
<comment type="pathway">
    <text evidence="1">Cofactor biosynthesis; NAD(+) biosynthesis; deamido-NAD(+) from nicotinate D-ribonucleotide: step 1/1.</text>
</comment>
<comment type="similarity">
    <text evidence="1">Belongs to the NadD family.</text>
</comment>
<name>NADD_CHLPB</name>
<accession>B3EQ84</accession>
<sequence length="198" mass="22559">MRLAVFGGSFDPPHNGHLALCLYARELLQVDRLVISASNNPLKDAPQAADRDRVKMAELLAETINRTGAFAEVSSWEANRGHPVYTIDLMEYLEEIYSTSDLTLLIGEDNFLNFRQWKSWEELIRRYSIIVFGRKADDGASDDSAISERLHDQSFRHIDLNLPLSSTEIRKRLASGDDCSAEIPSPIWQYIVENQLYQ</sequence>